<protein>
    <recommendedName>
        <fullName evidence="1">ATP synthase subunit beta</fullName>
        <ecNumber evidence="1">7.1.2.2</ecNumber>
    </recommendedName>
    <alternativeName>
        <fullName evidence="1">ATP synthase F1 sector subunit beta</fullName>
    </alternativeName>
    <alternativeName>
        <fullName evidence="1">F-ATPase subunit beta</fullName>
    </alternativeName>
</protein>
<comment type="function">
    <text evidence="1">Produces ATP from ADP in the presence of a proton gradient across the membrane. The catalytic sites are hosted primarily by the beta subunits.</text>
</comment>
<comment type="catalytic activity">
    <reaction evidence="1">
        <text>ATP + H2O + 4 H(+)(in) = ADP + phosphate + 5 H(+)(out)</text>
        <dbReference type="Rhea" id="RHEA:57720"/>
        <dbReference type="ChEBI" id="CHEBI:15377"/>
        <dbReference type="ChEBI" id="CHEBI:15378"/>
        <dbReference type="ChEBI" id="CHEBI:30616"/>
        <dbReference type="ChEBI" id="CHEBI:43474"/>
        <dbReference type="ChEBI" id="CHEBI:456216"/>
        <dbReference type="EC" id="7.1.2.2"/>
    </reaction>
</comment>
<comment type="subunit">
    <text evidence="1">F-type ATPases have 2 components, CF(1) - the catalytic core - and CF(0) - the membrane proton channel. CF(1) has five subunits: alpha(3), beta(3), gamma(1), delta(1), epsilon(1). CF(0) has three main subunits: a(1), b(2) and c(9-12). The alpha and beta chains form an alternating ring which encloses part of the gamma chain. CF(1) is attached to CF(0) by a central stalk formed by the gamma and epsilon chains, while a peripheral stalk is formed by the delta and b chains.</text>
</comment>
<comment type="subcellular location">
    <subcellularLocation>
        <location evidence="1">Cell membrane</location>
        <topology evidence="1">Peripheral membrane protein</topology>
    </subcellularLocation>
</comment>
<comment type="similarity">
    <text evidence="1">Belongs to the ATPase alpha/beta chains family.</text>
</comment>
<reference key="1">
    <citation type="submission" date="2006-12" db="EMBL/GenBank/DDBJ databases">
        <title>Bifidobacterium adolescentis complete genome sequence.</title>
        <authorList>
            <person name="Suzuki T."/>
            <person name="Tsuda Y."/>
            <person name="Kanou N."/>
            <person name="Inoue T."/>
            <person name="Kumazaki K."/>
            <person name="Nagano S."/>
            <person name="Hirai S."/>
            <person name="Tanaka K."/>
            <person name="Watanabe K."/>
        </authorList>
    </citation>
    <scope>NUCLEOTIDE SEQUENCE [LARGE SCALE GENOMIC DNA]</scope>
    <source>
        <strain>ATCC 15703 / DSM 20083 / NCTC 11814 / E194a</strain>
    </source>
</reference>
<feature type="chain" id="PRO_0000339479" description="ATP synthase subunit beta">
    <location>
        <begin position="1"/>
        <end position="494"/>
    </location>
</feature>
<feature type="binding site" evidence="1">
    <location>
        <begin position="177"/>
        <end position="184"/>
    </location>
    <ligand>
        <name>ATP</name>
        <dbReference type="ChEBI" id="CHEBI:30616"/>
    </ligand>
</feature>
<dbReference type="EC" id="7.1.2.2" evidence="1"/>
<dbReference type="EMBL" id="AP009256">
    <property type="protein sequence ID" value="BAF40208.1"/>
    <property type="molecule type" value="Genomic_DNA"/>
</dbReference>
<dbReference type="RefSeq" id="WP_011743718.1">
    <property type="nucleotide sequence ID" value="NZ_CAXVJJ010000003.1"/>
</dbReference>
<dbReference type="SMR" id="A1A3C5"/>
<dbReference type="STRING" id="367928.BAD_1427"/>
<dbReference type="PaxDb" id="1680-BADO_1604"/>
<dbReference type="GeneID" id="4557698"/>
<dbReference type="KEGG" id="bad:BAD_1427"/>
<dbReference type="HOGENOM" id="CLU_022398_0_2_11"/>
<dbReference type="Proteomes" id="UP000008702">
    <property type="component" value="Chromosome"/>
</dbReference>
<dbReference type="GO" id="GO:0005886">
    <property type="term" value="C:plasma membrane"/>
    <property type="evidence" value="ECO:0007669"/>
    <property type="project" value="UniProtKB-SubCell"/>
</dbReference>
<dbReference type="GO" id="GO:0045259">
    <property type="term" value="C:proton-transporting ATP synthase complex"/>
    <property type="evidence" value="ECO:0007669"/>
    <property type="project" value="UniProtKB-KW"/>
</dbReference>
<dbReference type="GO" id="GO:0005524">
    <property type="term" value="F:ATP binding"/>
    <property type="evidence" value="ECO:0007669"/>
    <property type="project" value="UniProtKB-UniRule"/>
</dbReference>
<dbReference type="GO" id="GO:0016887">
    <property type="term" value="F:ATP hydrolysis activity"/>
    <property type="evidence" value="ECO:0007669"/>
    <property type="project" value="InterPro"/>
</dbReference>
<dbReference type="GO" id="GO:0046933">
    <property type="term" value="F:proton-transporting ATP synthase activity, rotational mechanism"/>
    <property type="evidence" value="ECO:0007669"/>
    <property type="project" value="UniProtKB-UniRule"/>
</dbReference>
<dbReference type="CDD" id="cd18110">
    <property type="entry name" value="ATP-synt_F1_beta_C"/>
    <property type="match status" value="1"/>
</dbReference>
<dbReference type="CDD" id="cd18115">
    <property type="entry name" value="ATP-synt_F1_beta_N"/>
    <property type="match status" value="1"/>
</dbReference>
<dbReference type="CDD" id="cd01133">
    <property type="entry name" value="F1-ATPase_beta_CD"/>
    <property type="match status" value="1"/>
</dbReference>
<dbReference type="FunFam" id="1.10.1140.10:FF:000005">
    <property type="entry name" value="ATP synthase subunit beta"/>
    <property type="match status" value="1"/>
</dbReference>
<dbReference type="FunFam" id="2.40.10.170:FF:000005">
    <property type="entry name" value="ATP synthase subunit beta"/>
    <property type="match status" value="1"/>
</dbReference>
<dbReference type="FunFam" id="3.40.50.300:FF:000004">
    <property type="entry name" value="ATP synthase subunit beta"/>
    <property type="match status" value="1"/>
</dbReference>
<dbReference type="Gene3D" id="2.40.10.170">
    <property type="match status" value="1"/>
</dbReference>
<dbReference type="Gene3D" id="1.10.1140.10">
    <property type="entry name" value="Bovine Mitochondrial F1-atpase, Atp Synthase Beta Chain, Chain D, domain 3"/>
    <property type="match status" value="1"/>
</dbReference>
<dbReference type="Gene3D" id="3.40.50.300">
    <property type="entry name" value="P-loop containing nucleotide triphosphate hydrolases"/>
    <property type="match status" value="1"/>
</dbReference>
<dbReference type="HAMAP" id="MF_01347">
    <property type="entry name" value="ATP_synth_beta_bact"/>
    <property type="match status" value="1"/>
</dbReference>
<dbReference type="InterPro" id="IPR003593">
    <property type="entry name" value="AAA+_ATPase"/>
</dbReference>
<dbReference type="InterPro" id="IPR055190">
    <property type="entry name" value="ATP-synt_VA_C"/>
</dbReference>
<dbReference type="InterPro" id="IPR005722">
    <property type="entry name" value="ATP_synth_F1_bsu"/>
</dbReference>
<dbReference type="InterPro" id="IPR050053">
    <property type="entry name" value="ATPase_alpha/beta_chains"/>
</dbReference>
<dbReference type="InterPro" id="IPR004100">
    <property type="entry name" value="ATPase_F1/V1/A1_a/bsu_N"/>
</dbReference>
<dbReference type="InterPro" id="IPR036121">
    <property type="entry name" value="ATPase_F1/V1/A1_a/bsu_N_sf"/>
</dbReference>
<dbReference type="InterPro" id="IPR000194">
    <property type="entry name" value="ATPase_F1/V1/A1_a/bsu_nucl-bd"/>
</dbReference>
<dbReference type="InterPro" id="IPR024034">
    <property type="entry name" value="ATPase_F1/V1_b/a_C"/>
</dbReference>
<dbReference type="InterPro" id="IPR027417">
    <property type="entry name" value="P-loop_NTPase"/>
</dbReference>
<dbReference type="NCBIfam" id="TIGR01039">
    <property type="entry name" value="atpD"/>
    <property type="match status" value="1"/>
</dbReference>
<dbReference type="PANTHER" id="PTHR15184">
    <property type="entry name" value="ATP SYNTHASE"/>
    <property type="match status" value="1"/>
</dbReference>
<dbReference type="PANTHER" id="PTHR15184:SF71">
    <property type="entry name" value="ATP SYNTHASE SUBUNIT BETA, MITOCHONDRIAL"/>
    <property type="match status" value="1"/>
</dbReference>
<dbReference type="Pfam" id="PF00006">
    <property type="entry name" value="ATP-synt_ab"/>
    <property type="match status" value="1"/>
</dbReference>
<dbReference type="Pfam" id="PF02874">
    <property type="entry name" value="ATP-synt_ab_N"/>
    <property type="match status" value="1"/>
</dbReference>
<dbReference type="Pfam" id="PF22919">
    <property type="entry name" value="ATP-synt_VA_C"/>
    <property type="match status" value="1"/>
</dbReference>
<dbReference type="SMART" id="SM00382">
    <property type="entry name" value="AAA"/>
    <property type="match status" value="1"/>
</dbReference>
<dbReference type="SUPFAM" id="SSF47917">
    <property type="entry name" value="C-terminal domain of alpha and beta subunits of F1 ATP synthase"/>
    <property type="match status" value="1"/>
</dbReference>
<dbReference type="SUPFAM" id="SSF50615">
    <property type="entry name" value="N-terminal domain of alpha and beta subunits of F1 ATP synthase"/>
    <property type="match status" value="1"/>
</dbReference>
<dbReference type="SUPFAM" id="SSF52540">
    <property type="entry name" value="P-loop containing nucleoside triphosphate hydrolases"/>
    <property type="match status" value="1"/>
</dbReference>
<accession>A1A3C5</accession>
<sequence length="494" mass="53797">MAENQTTAAPETAAEPTAGRVTRIQGSVIDVEFPVGHLPDIYNALTVELANTGVHEEGETTKKITLEVEQHLGDSTVRTVALKPTDGLVRGATVYDTGGPISVPVGDVTKGHVFDVSGNILNKKADETVKVTERWPIHRNPPAFDQLESKTQMFETGIKVIDLLTPYVQGGKIGLFGGAGVGKTVLIQEMIQRVAQNHGGVSVFAGVGERTREGNDLIGEMDEAGVLEKTALVFGQMDEQPGTRLRVPLTALTMAEYFRDVQNQDVLLFIDNIFRFTQAGSEVSTLLGRMPSAVGYQPNLADEMGALQERITSTRGHSITSLQAIYVPADDYTDPAPATTFAHLDATTELSRDIASKGIYPAVDPLSSTSRILDPRYVGQAHYDCANRVKAILQRNKELQDIIALIGIDELGEEDKTTVNRARKIEQFLGQNFYVAEKFTGRPGSYVPADETIEAFTRICDGVYDDVPEQAFSGIGGIDDLEKKWHDMQKEYGA</sequence>
<name>ATPB_BIFAA</name>
<evidence type="ECO:0000255" key="1">
    <source>
        <dbReference type="HAMAP-Rule" id="MF_01347"/>
    </source>
</evidence>
<organism>
    <name type="scientific">Bifidobacterium adolescentis (strain ATCC 15703 / DSM 20083 / NCTC 11814 / E194a)</name>
    <dbReference type="NCBI Taxonomy" id="367928"/>
    <lineage>
        <taxon>Bacteria</taxon>
        <taxon>Bacillati</taxon>
        <taxon>Actinomycetota</taxon>
        <taxon>Actinomycetes</taxon>
        <taxon>Bifidobacteriales</taxon>
        <taxon>Bifidobacteriaceae</taxon>
        <taxon>Bifidobacterium</taxon>
    </lineage>
</organism>
<gene>
    <name evidence="1" type="primary">atpD</name>
    <name type="ordered locus">BAD_1427</name>
</gene>
<proteinExistence type="inferred from homology"/>
<keyword id="KW-0066">ATP synthesis</keyword>
<keyword id="KW-0067">ATP-binding</keyword>
<keyword id="KW-1003">Cell membrane</keyword>
<keyword id="KW-0139">CF(1)</keyword>
<keyword id="KW-0375">Hydrogen ion transport</keyword>
<keyword id="KW-0406">Ion transport</keyword>
<keyword id="KW-0472">Membrane</keyword>
<keyword id="KW-0547">Nucleotide-binding</keyword>
<keyword id="KW-1185">Reference proteome</keyword>
<keyword id="KW-1278">Translocase</keyword>
<keyword id="KW-0813">Transport</keyword>